<reference key="1">
    <citation type="journal article" date="2003" name="Proc. Natl. Acad. Sci. U.S.A.">
        <title>The genome sequence of Blochmannia floridanus: comparative analysis of reduced genomes.</title>
        <authorList>
            <person name="Gil R."/>
            <person name="Silva F.J."/>
            <person name="Zientz E."/>
            <person name="Delmotte F."/>
            <person name="Gonzalez-Candelas F."/>
            <person name="Latorre A."/>
            <person name="Rausell C."/>
            <person name="Kamerbeek J."/>
            <person name="Gadau J."/>
            <person name="Hoelldobler B."/>
            <person name="van Ham R.C.H.J."/>
            <person name="Gross R."/>
            <person name="Moya A."/>
        </authorList>
    </citation>
    <scope>NUCLEOTIDE SEQUENCE [LARGE SCALE GENOMIC DNA]</scope>
</reference>
<accession>Q7VRG4</accession>
<name>SPEB_BLOFL</name>
<dbReference type="EC" id="3.5.3.11"/>
<dbReference type="EMBL" id="BX248583">
    <property type="protein sequence ID" value="CAD83324.1"/>
    <property type="molecule type" value="Genomic_DNA"/>
</dbReference>
<dbReference type="SMR" id="Q7VRG4"/>
<dbReference type="STRING" id="203907.Bfl253"/>
<dbReference type="KEGG" id="bfl:Bfl253"/>
<dbReference type="eggNOG" id="COG0010">
    <property type="taxonomic scope" value="Bacteria"/>
</dbReference>
<dbReference type="HOGENOM" id="CLU_039478_0_0_6"/>
<dbReference type="OrthoDB" id="9789727at2"/>
<dbReference type="Proteomes" id="UP000002192">
    <property type="component" value="Chromosome"/>
</dbReference>
<dbReference type="GO" id="GO:0008783">
    <property type="term" value="F:agmatinase activity"/>
    <property type="evidence" value="ECO:0007669"/>
    <property type="project" value="UniProtKB-UniRule"/>
</dbReference>
<dbReference type="GO" id="GO:0030145">
    <property type="term" value="F:manganese ion binding"/>
    <property type="evidence" value="ECO:0007669"/>
    <property type="project" value="InterPro"/>
</dbReference>
<dbReference type="GO" id="GO:0033389">
    <property type="term" value="P:putrescine biosynthetic process from arginine, via agmatine"/>
    <property type="evidence" value="ECO:0007669"/>
    <property type="project" value="TreeGrafter"/>
</dbReference>
<dbReference type="GO" id="GO:0008295">
    <property type="term" value="P:spermidine biosynthetic process"/>
    <property type="evidence" value="ECO:0007669"/>
    <property type="project" value="UniProtKB-UniRule"/>
</dbReference>
<dbReference type="FunFam" id="3.40.800.10:FF:000001">
    <property type="entry name" value="Agmatinase"/>
    <property type="match status" value="1"/>
</dbReference>
<dbReference type="Gene3D" id="3.40.800.10">
    <property type="entry name" value="Ureohydrolase domain"/>
    <property type="match status" value="1"/>
</dbReference>
<dbReference type="HAMAP" id="MF_01418">
    <property type="entry name" value="SpeB"/>
    <property type="match status" value="1"/>
</dbReference>
<dbReference type="InterPro" id="IPR023694">
    <property type="entry name" value="Agmatinase"/>
</dbReference>
<dbReference type="InterPro" id="IPR005925">
    <property type="entry name" value="Agmatinase-rel"/>
</dbReference>
<dbReference type="InterPro" id="IPR006035">
    <property type="entry name" value="Ureohydrolase"/>
</dbReference>
<dbReference type="InterPro" id="IPR023696">
    <property type="entry name" value="Ureohydrolase_dom_sf"/>
</dbReference>
<dbReference type="InterPro" id="IPR020855">
    <property type="entry name" value="Ureohydrolase_Mn_BS"/>
</dbReference>
<dbReference type="NCBIfam" id="TIGR01230">
    <property type="entry name" value="agmatinase"/>
    <property type="match status" value="1"/>
</dbReference>
<dbReference type="NCBIfam" id="NF002564">
    <property type="entry name" value="PRK02190.1"/>
    <property type="match status" value="1"/>
</dbReference>
<dbReference type="PANTHER" id="PTHR11358">
    <property type="entry name" value="ARGINASE/AGMATINASE"/>
    <property type="match status" value="1"/>
</dbReference>
<dbReference type="PANTHER" id="PTHR11358:SF26">
    <property type="entry name" value="GUANIDINO ACID HYDROLASE, MITOCHONDRIAL"/>
    <property type="match status" value="1"/>
</dbReference>
<dbReference type="Pfam" id="PF00491">
    <property type="entry name" value="Arginase"/>
    <property type="match status" value="1"/>
</dbReference>
<dbReference type="PIRSF" id="PIRSF036979">
    <property type="entry name" value="Arginase"/>
    <property type="match status" value="1"/>
</dbReference>
<dbReference type="SUPFAM" id="SSF52768">
    <property type="entry name" value="Arginase/deacetylase"/>
    <property type="match status" value="1"/>
</dbReference>
<dbReference type="PROSITE" id="PS01053">
    <property type="entry name" value="ARGINASE_1"/>
    <property type="match status" value="1"/>
</dbReference>
<dbReference type="PROSITE" id="PS51409">
    <property type="entry name" value="ARGINASE_2"/>
    <property type="match status" value="1"/>
</dbReference>
<proteinExistence type="inferred from homology"/>
<keyword id="KW-0378">Hydrolase</keyword>
<keyword id="KW-0464">Manganese</keyword>
<keyword id="KW-0479">Metal-binding</keyword>
<keyword id="KW-0620">Polyamine biosynthesis</keyword>
<keyword id="KW-0661">Putrescine biosynthesis</keyword>
<keyword id="KW-1185">Reference proteome</keyword>
<keyword id="KW-0745">Spermidine biosynthesis</keyword>
<sequence length="303" mass="34254">MCTLMHKHDDSLFSNSFGFLRLPLEFYPYTRHNDWVITGVPFDIATSGRSGSRFGPASIRKASINLAWENCRWPWNFDIRQKLKIIDCGDLIYKSGNVQDFTNILQKHIENLLRFRKKILLLGGDHYITLPVLRAYSKFFGTISIIHFDAHADYYDNNNQYDHGAVILYALHEKLINPNRSVQIGIRTEYDKNFGFTVLDAEYVNTTAVHVLINQIVSVIQNRPVYLTFDIDCLDPSVAPGTGTPVIGGLTTSCALQIIRGFQKLNIIGIDIVEVAPVYDCAQITALAAATLGLEMLYTQVKF</sequence>
<feature type="chain" id="PRO_0000173729" description="Agmatinase">
    <location>
        <begin position="1"/>
        <end position="303"/>
    </location>
</feature>
<feature type="binding site" evidence="1">
    <location>
        <position position="126"/>
    </location>
    <ligand>
        <name>Mn(2+)</name>
        <dbReference type="ChEBI" id="CHEBI:29035"/>
    </ligand>
</feature>
<feature type="binding site" evidence="1">
    <location>
        <position position="149"/>
    </location>
    <ligand>
        <name>Mn(2+)</name>
        <dbReference type="ChEBI" id="CHEBI:29035"/>
    </ligand>
</feature>
<feature type="binding site" evidence="1">
    <location>
        <position position="151"/>
    </location>
    <ligand>
        <name>Mn(2+)</name>
        <dbReference type="ChEBI" id="CHEBI:29035"/>
    </ligand>
</feature>
<feature type="binding site" evidence="1">
    <location>
        <position position="153"/>
    </location>
    <ligand>
        <name>Mn(2+)</name>
        <dbReference type="ChEBI" id="CHEBI:29035"/>
    </ligand>
</feature>
<feature type="binding site" evidence="1">
    <location>
        <position position="230"/>
    </location>
    <ligand>
        <name>Mn(2+)</name>
        <dbReference type="ChEBI" id="CHEBI:29035"/>
    </ligand>
</feature>
<feature type="binding site" evidence="1">
    <location>
        <position position="232"/>
    </location>
    <ligand>
        <name>Mn(2+)</name>
        <dbReference type="ChEBI" id="CHEBI:29035"/>
    </ligand>
</feature>
<comment type="function">
    <text evidence="1">Catalyzes the formation of putrescine from agmatine.</text>
</comment>
<comment type="catalytic activity">
    <reaction>
        <text>agmatine + H2O = urea + putrescine</text>
        <dbReference type="Rhea" id="RHEA:13929"/>
        <dbReference type="ChEBI" id="CHEBI:15377"/>
        <dbReference type="ChEBI" id="CHEBI:16199"/>
        <dbReference type="ChEBI" id="CHEBI:58145"/>
        <dbReference type="ChEBI" id="CHEBI:326268"/>
        <dbReference type="EC" id="3.5.3.11"/>
    </reaction>
</comment>
<comment type="cofactor">
    <cofactor evidence="1">
        <name>Mn(2+)</name>
        <dbReference type="ChEBI" id="CHEBI:29035"/>
    </cofactor>
</comment>
<comment type="similarity">
    <text evidence="2">Belongs to the arginase family. Agmatinase subfamily.</text>
</comment>
<evidence type="ECO:0000250" key="1"/>
<evidence type="ECO:0000305" key="2"/>
<gene>
    <name type="primary">speB</name>
    <name type="ordered locus">Bfl253</name>
</gene>
<protein>
    <recommendedName>
        <fullName>Agmatinase</fullName>
        <ecNumber>3.5.3.11</ecNumber>
    </recommendedName>
    <alternativeName>
        <fullName>Agmatine ureohydrolase</fullName>
        <shortName>AUH</shortName>
    </alternativeName>
</protein>
<organism>
    <name type="scientific">Blochmanniella floridana</name>
    <dbReference type="NCBI Taxonomy" id="203907"/>
    <lineage>
        <taxon>Bacteria</taxon>
        <taxon>Pseudomonadati</taxon>
        <taxon>Pseudomonadota</taxon>
        <taxon>Gammaproteobacteria</taxon>
        <taxon>Enterobacterales</taxon>
        <taxon>Enterobacteriaceae</taxon>
        <taxon>ant endosymbionts</taxon>
        <taxon>Candidatus Blochmanniella</taxon>
    </lineage>
</organism>